<name>OAR_BOMMO</name>
<reference key="1">
    <citation type="journal article" date="1996" name="Insect Biochem. Mol. Biol.">
        <title>Cloning of biogenic amine receptors from moths (Bombyx mori and Heliothis virescens).</title>
        <authorList>
            <person name="von Nickisch-Rosenegk E."/>
            <person name="Krieger J."/>
            <person name="Kubick S."/>
            <person name="Laage R."/>
            <person name="Strobel J."/>
            <person name="Strotmann J."/>
            <person name="Breer H."/>
        </authorList>
    </citation>
    <scope>NUCLEOTIDE SEQUENCE [MRNA]</scope>
    <source>
        <tissue>Antenna</tissue>
    </source>
</reference>
<feature type="chain" id="PRO_0000069952" description="Octopamine receptor">
    <location>
        <begin position="1"/>
        <end position="479"/>
    </location>
</feature>
<feature type="topological domain" description="Extracellular" evidence="2">
    <location>
        <begin position="1"/>
        <end position="57"/>
    </location>
</feature>
<feature type="transmembrane region" description="Helical; Name=1" evidence="2">
    <location>
        <begin position="58"/>
        <end position="80"/>
    </location>
</feature>
<feature type="topological domain" description="Cytoplasmic" evidence="2">
    <location>
        <begin position="81"/>
        <end position="90"/>
    </location>
</feature>
<feature type="transmembrane region" description="Helical; Name=2" evidence="2">
    <location>
        <begin position="91"/>
        <end position="112"/>
    </location>
</feature>
<feature type="topological domain" description="Extracellular" evidence="2">
    <location>
        <begin position="113"/>
        <end position="129"/>
    </location>
</feature>
<feature type="transmembrane region" description="Helical; Name=3" evidence="2">
    <location>
        <begin position="130"/>
        <end position="150"/>
    </location>
</feature>
<feature type="topological domain" description="Cytoplasmic" evidence="2">
    <location>
        <begin position="151"/>
        <end position="170"/>
    </location>
</feature>
<feature type="transmembrane region" description="Helical; Name=4" evidence="2">
    <location>
        <begin position="171"/>
        <end position="193"/>
    </location>
</feature>
<feature type="topological domain" description="Extracellular" evidence="2">
    <location>
        <begin position="194"/>
        <end position="218"/>
    </location>
</feature>
<feature type="transmembrane region" description="Helical; Name=5" evidence="2">
    <location>
        <begin position="219"/>
        <end position="240"/>
    </location>
</feature>
<feature type="topological domain" description="Cytoplasmic" evidence="2">
    <location>
        <begin position="241"/>
        <end position="407"/>
    </location>
</feature>
<feature type="transmembrane region" description="Helical; Name=6" evidence="2">
    <location>
        <begin position="408"/>
        <end position="429"/>
    </location>
</feature>
<feature type="topological domain" description="Extracellular" evidence="2">
    <location>
        <begin position="430"/>
        <end position="441"/>
    </location>
</feature>
<feature type="transmembrane region" description="Helical; Name=7" evidence="2">
    <location>
        <begin position="442"/>
        <end position="462"/>
    </location>
</feature>
<feature type="topological domain" description="Cytoplasmic" evidence="2">
    <location>
        <begin position="463"/>
        <end position="479"/>
    </location>
</feature>
<feature type="region of interest" description="Disordered" evidence="4">
    <location>
        <begin position="260"/>
        <end position="319"/>
    </location>
</feature>
<feature type="compositionally biased region" description="Polar residues" evidence="4">
    <location>
        <begin position="274"/>
        <end position="287"/>
    </location>
</feature>
<feature type="compositionally biased region" description="Basic residues" evidence="4">
    <location>
        <begin position="299"/>
        <end position="315"/>
    </location>
</feature>
<feature type="glycosylation site" description="N-linked (GlcNAc...) asparagine" evidence="2">
    <location>
        <position position="11"/>
    </location>
</feature>
<feature type="glycosylation site" description="N-linked (GlcNAc...) asparagine" evidence="2">
    <location>
        <position position="16"/>
    </location>
</feature>
<comment type="function">
    <text evidence="1">Receptor for octopamine. Octopamine (OA) is a neurotransmitter, neurohormone, and neuromodulator in invertebrates. The activity of this receptor is mediated by G proteins which activate adenylyl cyclase (By similarity).</text>
</comment>
<comment type="subcellular location">
    <subcellularLocation>
        <location>Cell membrane</location>
        <topology>Multi-pass membrane protein</topology>
    </subcellularLocation>
</comment>
<comment type="similarity">
    <text evidence="3">Belongs to the G-protein coupled receptor 1 family.</text>
</comment>
<keyword id="KW-1003">Cell membrane</keyword>
<keyword id="KW-0297">G-protein coupled receptor</keyword>
<keyword id="KW-0325">Glycoprotein</keyword>
<keyword id="KW-0472">Membrane</keyword>
<keyword id="KW-0675">Receptor</keyword>
<keyword id="KW-1185">Reference proteome</keyword>
<keyword id="KW-0807">Transducer</keyword>
<keyword id="KW-0812">Transmembrane</keyword>
<keyword id="KW-1133">Transmembrane helix</keyword>
<dbReference type="EMBL" id="X95607">
    <property type="protein sequence ID" value="CAA64865.1"/>
    <property type="molecule type" value="mRNA"/>
</dbReference>
<dbReference type="RefSeq" id="NP_001037504.1">
    <property type="nucleotide sequence ID" value="NM_001044039.1"/>
</dbReference>
<dbReference type="SMR" id="Q17232"/>
<dbReference type="FunCoup" id="Q17232">
    <property type="interactions" value="124"/>
</dbReference>
<dbReference type="STRING" id="7091.Q17232"/>
<dbReference type="PaxDb" id="7091-BGIBMGA011067-TA"/>
<dbReference type="EnsemblMetazoa" id="NM_001044039.1">
    <property type="protein sequence ID" value="NP_001037504.1"/>
    <property type="gene ID" value="LOC693055"/>
</dbReference>
<dbReference type="GeneID" id="693055"/>
<dbReference type="KEGG" id="bmor:693055"/>
<dbReference type="eggNOG" id="KOG3656">
    <property type="taxonomic scope" value="Eukaryota"/>
</dbReference>
<dbReference type="HOGENOM" id="CLU_009579_11_1_1"/>
<dbReference type="InParanoid" id="Q17232"/>
<dbReference type="OrthoDB" id="6432764at2759"/>
<dbReference type="Proteomes" id="UP000005204">
    <property type="component" value="Unassembled WGS sequence"/>
</dbReference>
<dbReference type="GO" id="GO:0005886">
    <property type="term" value="C:plasma membrane"/>
    <property type="evidence" value="ECO:0007669"/>
    <property type="project" value="UniProtKB-SubCell"/>
</dbReference>
<dbReference type="GO" id="GO:0004989">
    <property type="term" value="F:octopamine receptor activity"/>
    <property type="evidence" value="ECO:0007669"/>
    <property type="project" value="InterPro"/>
</dbReference>
<dbReference type="CDD" id="cd15060">
    <property type="entry name" value="7tmA_tyramine_octopamine_R-like"/>
    <property type="match status" value="1"/>
</dbReference>
<dbReference type="FunFam" id="1.20.1070.10:FF:000248">
    <property type="entry name" value="5-hydroxytryptamine receptor 1A-beta"/>
    <property type="match status" value="1"/>
</dbReference>
<dbReference type="Gene3D" id="1.20.1070.10">
    <property type="entry name" value="Rhodopsin 7-helix transmembrane proteins"/>
    <property type="match status" value="2"/>
</dbReference>
<dbReference type="InterPro" id="IPR000276">
    <property type="entry name" value="GPCR_Rhodpsn"/>
</dbReference>
<dbReference type="InterPro" id="IPR017452">
    <property type="entry name" value="GPCR_Rhodpsn_7TM"/>
</dbReference>
<dbReference type="InterPro" id="IPR002002">
    <property type="entry name" value="Octopmn_rcpt"/>
</dbReference>
<dbReference type="PANTHER" id="PTHR24248">
    <property type="entry name" value="ADRENERGIC RECEPTOR-RELATED G-PROTEIN COUPLED RECEPTOR"/>
    <property type="match status" value="1"/>
</dbReference>
<dbReference type="PANTHER" id="PTHR24248:SF174">
    <property type="entry name" value="TYRAMINE_OCTOPAMINE RECEPTOR"/>
    <property type="match status" value="1"/>
</dbReference>
<dbReference type="Pfam" id="PF00001">
    <property type="entry name" value="7tm_1"/>
    <property type="match status" value="1"/>
</dbReference>
<dbReference type="PRINTS" id="PR00237">
    <property type="entry name" value="GPCRRHODOPSN"/>
</dbReference>
<dbReference type="PRINTS" id="PR00664">
    <property type="entry name" value="OCTOPAMINER"/>
</dbReference>
<dbReference type="SMART" id="SM01381">
    <property type="entry name" value="7TM_GPCR_Srsx"/>
    <property type="match status" value="1"/>
</dbReference>
<dbReference type="SUPFAM" id="SSF81321">
    <property type="entry name" value="Family A G protein-coupled receptor-like"/>
    <property type="match status" value="1"/>
</dbReference>
<dbReference type="PROSITE" id="PS00237">
    <property type="entry name" value="G_PROTEIN_RECEP_F1_1"/>
    <property type="match status" value="1"/>
</dbReference>
<dbReference type="PROSITE" id="PS50262">
    <property type="entry name" value="G_PROTEIN_RECEP_F1_2"/>
    <property type="match status" value="1"/>
</dbReference>
<accession>Q17232</accession>
<evidence type="ECO:0000250" key="1"/>
<evidence type="ECO:0000255" key="2"/>
<evidence type="ECO:0000255" key="3">
    <source>
        <dbReference type="PROSITE-ProRule" id="PRU00521"/>
    </source>
</evidence>
<evidence type="ECO:0000256" key="4">
    <source>
        <dbReference type="SAM" id="MobiDB-lite"/>
    </source>
</evidence>
<proteinExistence type="evidence at transcript level"/>
<protein>
    <recommendedName>
        <fullName>Octopamine receptor</fullName>
    </recommendedName>
</protein>
<sequence length="479" mass="54518">MGQAATHDANNYTSINYTEIYDVIEDEKDVCAVADEPNIPCSFGISLAVPEWEAICTAIILTMIIISTVVGNILVILSVFTYKPLRIVQNFFIVSLAVADLTVAILVLPLNVAYSILGQWVFGIYVCKMWLTCDIMCCTSSILNLCAIALDRYWAITDPINYAQKRTLERVLFMIGIVWILSLVISSPPLLGWNDWPEVFEPDTPCRLTSQPGFVIFSSSGSFYIPLVIMTVVYFEIYLATKKRLRDRAKATKISTISSGRNKYETKESDPNDQDSVSSDANPNEHQGGTRLVAENEKKHRTRKLTPKKKPKRRYWSKDDKSHNKLIIPILSNENSVTDIGENLENRNTSSESNSKETHEDNMIEITEAAPVKIQKRPKQNQTNAVYQFIEEKQRISLTRERRAARTLGIIMGVFVVCWLPFFVIYLVIPFCVSCCLSNKFINFITWLGYVNSALNPLIYTIFNMDFRRAFKKLLFIKC</sequence>
<organism>
    <name type="scientific">Bombyx mori</name>
    <name type="common">Silk moth</name>
    <dbReference type="NCBI Taxonomy" id="7091"/>
    <lineage>
        <taxon>Eukaryota</taxon>
        <taxon>Metazoa</taxon>
        <taxon>Ecdysozoa</taxon>
        <taxon>Arthropoda</taxon>
        <taxon>Hexapoda</taxon>
        <taxon>Insecta</taxon>
        <taxon>Pterygota</taxon>
        <taxon>Neoptera</taxon>
        <taxon>Endopterygota</taxon>
        <taxon>Lepidoptera</taxon>
        <taxon>Glossata</taxon>
        <taxon>Ditrysia</taxon>
        <taxon>Bombycoidea</taxon>
        <taxon>Bombycidae</taxon>
        <taxon>Bombycinae</taxon>
        <taxon>Bombyx</taxon>
    </lineage>
</organism>